<gene>
    <name type="ORF">SPAC1B1.04c</name>
</gene>
<evidence type="ECO:0000250" key="1"/>
<evidence type="ECO:0000256" key="2">
    <source>
        <dbReference type="SAM" id="MobiDB-lite"/>
    </source>
</evidence>
<evidence type="ECO:0000269" key="3">
    <source>
    </source>
</evidence>
<evidence type="ECO:0000269" key="4">
    <source>
    </source>
</evidence>
<evidence type="ECO:0000305" key="5"/>
<keyword id="KW-0963">Cytoplasm</keyword>
<keyword id="KW-0479">Metal-binding</keyword>
<keyword id="KW-0597">Phosphoprotein</keyword>
<keyword id="KW-1185">Reference proteome</keyword>
<keyword id="KW-0862">Zinc</keyword>
<keyword id="KW-0863">Zinc-finger</keyword>
<protein>
    <recommendedName>
        <fullName>PAB-dependent poly(A)-specific ribonuclease subunit pan3-like</fullName>
    </recommendedName>
    <alternativeName>
        <fullName>PAB1P-dependent poly(A)-nuclease</fullName>
    </alternativeName>
</protein>
<sequence length="681" mass="76046">MDERRSSIFSTNIPCRNEQLYGRCPYIDKGCFFQHKNQDNAPASSKPPSATAIDPQNSGFSTKLSINSPSFTPLKLSKTSISSASNKESVPLTRPKSYSSALSSGKNGAAAQQAANSPKTVSLMTSSSKAANALQTHKSSLARAASAVPFSPSKATTVSLKESASLTSLSNNKSVSNLNSISGASSPSGSLVNLHSLTRSASFVPQPSVPNSGQLSNADMSRHILARFPPFFHNLNEQQQKTTSFFLADDHLKWFTYLTQEFYQFANIPKLPSHVLSYHSLIPRRMIVTVLPVLRYATSIYKVIDGNNGLPYSFVQLRDFTLLNDRNITNVSPWTKVDSPHVIKIREAFTTHAFEQKSIVFVYNYLPSCPSLYDLFFASPVFRKRTSSFYFSQPLKATKEVLWCFASQLISALYSIHSSGLAAKMVSLKNVLMVGKMRLAIFGLGIMDVIQEESTEPLTSLQRNDCRDVGLILLALATDTENVTLSTAKAHLTRLKTIVSTDASLVELIEVLIFNEELRIQTLLPTMLSYMVNNYESVLLMEDVYETYLAEQVENDRLLRLLLKLEFLDDRPEYVDDPDWSASGVYFVIRLFRKYMFQVQTIDDASKKPTLQSTTTPPRKLLNKAHLLSCLNKLDAGTDEQILLEDEFTRIIMSFKEVKTTINTAFMELERRCSNNLSVKK</sequence>
<reference key="1">
    <citation type="journal article" date="2002" name="Nature">
        <title>The genome sequence of Schizosaccharomyces pombe.</title>
        <authorList>
            <person name="Wood V."/>
            <person name="Gwilliam R."/>
            <person name="Rajandream M.A."/>
            <person name="Lyne M.H."/>
            <person name="Lyne R."/>
            <person name="Stewart A."/>
            <person name="Sgouros J.G."/>
            <person name="Peat N."/>
            <person name="Hayles J."/>
            <person name="Baker S.G."/>
            <person name="Basham D."/>
            <person name="Bowman S."/>
            <person name="Brooks K."/>
            <person name="Brown D."/>
            <person name="Brown S."/>
            <person name="Chillingworth T."/>
            <person name="Churcher C.M."/>
            <person name="Collins M."/>
            <person name="Connor R."/>
            <person name="Cronin A."/>
            <person name="Davis P."/>
            <person name="Feltwell T."/>
            <person name="Fraser A."/>
            <person name="Gentles S."/>
            <person name="Goble A."/>
            <person name="Hamlin N."/>
            <person name="Harris D.E."/>
            <person name="Hidalgo J."/>
            <person name="Hodgson G."/>
            <person name="Holroyd S."/>
            <person name="Hornsby T."/>
            <person name="Howarth S."/>
            <person name="Huckle E.J."/>
            <person name="Hunt S."/>
            <person name="Jagels K."/>
            <person name="James K.D."/>
            <person name="Jones L."/>
            <person name="Jones M."/>
            <person name="Leather S."/>
            <person name="McDonald S."/>
            <person name="McLean J."/>
            <person name="Mooney P."/>
            <person name="Moule S."/>
            <person name="Mungall K.L."/>
            <person name="Murphy L.D."/>
            <person name="Niblett D."/>
            <person name="Odell C."/>
            <person name="Oliver K."/>
            <person name="O'Neil S."/>
            <person name="Pearson D."/>
            <person name="Quail M.A."/>
            <person name="Rabbinowitsch E."/>
            <person name="Rutherford K.M."/>
            <person name="Rutter S."/>
            <person name="Saunders D."/>
            <person name="Seeger K."/>
            <person name="Sharp S."/>
            <person name="Skelton J."/>
            <person name="Simmonds M.N."/>
            <person name="Squares R."/>
            <person name="Squares S."/>
            <person name="Stevens K."/>
            <person name="Taylor K."/>
            <person name="Taylor R.G."/>
            <person name="Tivey A."/>
            <person name="Walsh S.V."/>
            <person name="Warren T."/>
            <person name="Whitehead S."/>
            <person name="Woodward J.R."/>
            <person name="Volckaert G."/>
            <person name="Aert R."/>
            <person name="Robben J."/>
            <person name="Grymonprez B."/>
            <person name="Weltjens I."/>
            <person name="Vanstreels E."/>
            <person name="Rieger M."/>
            <person name="Schaefer M."/>
            <person name="Mueller-Auer S."/>
            <person name="Gabel C."/>
            <person name="Fuchs M."/>
            <person name="Duesterhoeft A."/>
            <person name="Fritzc C."/>
            <person name="Holzer E."/>
            <person name="Moestl D."/>
            <person name="Hilbert H."/>
            <person name="Borzym K."/>
            <person name="Langer I."/>
            <person name="Beck A."/>
            <person name="Lehrach H."/>
            <person name="Reinhardt R."/>
            <person name="Pohl T.M."/>
            <person name="Eger P."/>
            <person name="Zimmermann W."/>
            <person name="Wedler H."/>
            <person name="Wambutt R."/>
            <person name="Purnelle B."/>
            <person name="Goffeau A."/>
            <person name="Cadieu E."/>
            <person name="Dreano S."/>
            <person name="Gloux S."/>
            <person name="Lelaure V."/>
            <person name="Mottier S."/>
            <person name="Galibert F."/>
            <person name="Aves S.J."/>
            <person name="Xiang Z."/>
            <person name="Hunt C."/>
            <person name="Moore K."/>
            <person name="Hurst S.M."/>
            <person name="Lucas M."/>
            <person name="Rochet M."/>
            <person name="Gaillardin C."/>
            <person name="Tallada V.A."/>
            <person name="Garzon A."/>
            <person name="Thode G."/>
            <person name="Daga R.R."/>
            <person name="Cruzado L."/>
            <person name="Jimenez J."/>
            <person name="Sanchez M."/>
            <person name="del Rey F."/>
            <person name="Benito J."/>
            <person name="Dominguez A."/>
            <person name="Revuelta J.L."/>
            <person name="Moreno S."/>
            <person name="Armstrong J."/>
            <person name="Forsburg S.L."/>
            <person name="Cerutti L."/>
            <person name="Lowe T."/>
            <person name="McCombie W.R."/>
            <person name="Paulsen I."/>
            <person name="Potashkin J."/>
            <person name="Shpakovski G.V."/>
            <person name="Ussery D."/>
            <person name="Barrell B.G."/>
            <person name="Nurse P."/>
        </authorList>
    </citation>
    <scope>NUCLEOTIDE SEQUENCE [LARGE SCALE GENOMIC DNA]</scope>
    <source>
        <strain>972 / ATCC 24843</strain>
    </source>
</reference>
<reference key="2">
    <citation type="journal article" date="2011" name="Science">
        <title>Comparative functional genomics of the fission yeasts.</title>
        <authorList>
            <person name="Rhind N."/>
            <person name="Chen Z."/>
            <person name="Yassour M."/>
            <person name="Thompson D.A."/>
            <person name="Haas B.J."/>
            <person name="Habib N."/>
            <person name="Wapinski I."/>
            <person name="Roy S."/>
            <person name="Lin M.F."/>
            <person name="Heiman D.I."/>
            <person name="Young S.K."/>
            <person name="Furuya K."/>
            <person name="Guo Y."/>
            <person name="Pidoux A."/>
            <person name="Chen H.M."/>
            <person name="Robbertse B."/>
            <person name="Goldberg J.M."/>
            <person name="Aoki K."/>
            <person name="Bayne E.H."/>
            <person name="Berlin A.M."/>
            <person name="Desjardins C.A."/>
            <person name="Dobbs E."/>
            <person name="Dukaj L."/>
            <person name="Fan L."/>
            <person name="FitzGerald M.G."/>
            <person name="French C."/>
            <person name="Gujja S."/>
            <person name="Hansen K."/>
            <person name="Keifenheim D."/>
            <person name="Levin J.Z."/>
            <person name="Mosher R.A."/>
            <person name="Mueller C.A."/>
            <person name="Pfiffner J."/>
            <person name="Priest M."/>
            <person name="Russ C."/>
            <person name="Smialowska A."/>
            <person name="Swoboda P."/>
            <person name="Sykes S.M."/>
            <person name="Vaughn M."/>
            <person name="Vengrova S."/>
            <person name="Yoder R."/>
            <person name="Zeng Q."/>
            <person name="Allshire R."/>
            <person name="Baulcombe D."/>
            <person name="Birren B.W."/>
            <person name="Brown W."/>
            <person name="Ekwall K."/>
            <person name="Kellis M."/>
            <person name="Leatherwood J."/>
            <person name="Levin H."/>
            <person name="Margalit H."/>
            <person name="Martienssen R."/>
            <person name="Nieduszynski C.A."/>
            <person name="Spatafora J.W."/>
            <person name="Friedman N."/>
            <person name="Dalgaard J.Z."/>
            <person name="Baumann P."/>
            <person name="Niki H."/>
            <person name="Regev A."/>
            <person name="Nusbaum C."/>
        </authorList>
    </citation>
    <scope>REVISION OF GENE MODEL</scope>
</reference>
<reference key="3">
    <citation type="journal article" date="2006" name="Nat. Biotechnol.">
        <title>ORFeome cloning and global analysis of protein localization in the fission yeast Schizosaccharomyces pombe.</title>
        <authorList>
            <person name="Matsuyama A."/>
            <person name="Arai R."/>
            <person name="Yashiroda Y."/>
            <person name="Shirai A."/>
            <person name="Kamata A."/>
            <person name="Sekido S."/>
            <person name="Kobayashi Y."/>
            <person name="Hashimoto A."/>
            <person name="Hamamoto M."/>
            <person name="Hiraoka Y."/>
            <person name="Horinouchi S."/>
            <person name="Yoshida M."/>
        </authorList>
    </citation>
    <scope>SUBCELLULAR LOCATION [LARGE SCALE ANALYSIS]</scope>
</reference>
<reference key="4">
    <citation type="journal article" date="2008" name="J. Proteome Res.">
        <title>Phosphoproteome analysis of fission yeast.</title>
        <authorList>
            <person name="Wilson-Grady J.T."/>
            <person name="Villen J."/>
            <person name="Gygi S.P."/>
        </authorList>
    </citation>
    <scope>PHOSPHORYLATION [LARGE SCALE ANALYSIS] AT SER-165</scope>
    <scope>IDENTIFICATION BY MASS SPECTROMETRY</scope>
</reference>
<name>PAN3L_SCHPO</name>
<accession>O13865</accession>
<proteinExistence type="evidence at protein level"/>
<comment type="function">
    <text evidence="1">Regulatory subunit of the poly(A)-nuclease (PAN) deadenylation complex.</text>
</comment>
<comment type="subcellular location">
    <subcellularLocation>
        <location evidence="3">Cytoplasm</location>
    </subcellularLocation>
</comment>
<comment type="similarity">
    <text evidence="5">Belongs to the protein kinase superfamily. PAN3 family.</text>
</comment>
<organism>
    <name type="scientific">Schizosaccharomyces pombe (strain 972 / ATCC 24843)</name>
    <name type="common">Fission yeast</name>
    <dbReference type="NCBI Taxonomy" id="284812"/>
    <lineage>
        <taxon>Eukaryota</taxon>
        <taxon>Fungi</taxon>
        <taxon>Dikarya</taxon>
        <taxon>Ascomycota</taxon>
        <taxon>Taphrinomycotina</taxon>
        <taxon>Schizosaccharomycetes</taxon>
        <taxon>Schizosaccharomycetales</taxon>
        <taxon>Schizosaccharomycetaceae</taxon>
        <taxon>Schizosaccharomyces</taxon>
    </lineage>
</organism>
<feature type="chain" id="PRO_0000372357" description="PAB-dependent poly(A)-specific ribonuclease subunit pan3-like">
    <location>
        <begin position="1"/>
        <end position="681"/>
    </location>
</feature>
<feature type="zinc finger region" description="C3H1-type">
    <location>
        <begin position="9"/>
        <end position="38"/>
    </location>
</feature>
<feature type="region of interest" description="Disordered" evidence="2">
    <location>
        <begin position="38"/>
        <end position="58"/>
    </location>
</feature>
<feature type="region of interest" description="Disordered" evidence="2">
    <location>
        <begin position="82"/>
        <end position="123"/>
    </location>
</feature>
<feature type="compositionally biased region" description="Low complexity" evidence="2">
    <location>
        <begin position="41"/>
        <end position="50"/>
    </location>
</feature>
<feature type="compositionally biased region" description="Polar residues" evidence="2">
    <location>
        <begin position="96"/>
        <end position="106"/>
    </location>
</feature>
<feature type="modified residue" description="Phosphoserine" evidence="4">
    <location>
        <position position="165"/>
    </location>
</feature>
<dbReference type="EMBL" id="CU329670">
    <property type="protein sequence ID" value="CAB11083.2"/>
    <property type="molecule type" value="Genomic_DNA"/>
</dbReference>
<dbReference type="PIR" id="T38017">
    <property type="entry name" value="T38017"/>
</dbReference>
<dbReference type="SMR" id="O13865"/>
<dbReference type="BioGRID" id="279009">
    <property type="interactions" value="3"/>
</dbReference>
<dbReference type="FunCoup" id="O13865">
    <property type="interactions" value="143"/>
</dbReference>
<dbReference type="STRING" id="284812.O13865"/>
<dbReference type="iPTMnet" id="O13865"/>
<dbReference type="PaxDb" id="4896-SPAC1B1.04c.1"/>
<dbReference type="EnsemblFungi" id="SPAC1B1.04c.1">
    <property type="protein sequence ID" value="SPAC1B1.04c.1:pep"/>
    <property type="gene ID" value="SPAC1B1.04c"/>
</dbReference>
<dbReference type="KEGG" id="spo:2542552"/>
<dbReference type="PomBase" id="SPAC1B1.04c"/>
<dbReference type="VEuPathDB" id="FungiDB:SPAC1B1.04c"/>
<dbReference type="eggNOG" id="KOG3741">
    <property type="taxonomic scope" value="Eukaryota"/>
</dbReference>
<dbReference type="HOGENOM" id="CLU_403404_0_0_1"/>
<dbReference type="InParanoid" id="O13865"/>
<dbReference type="OMA" id="NIPCRNE"/>
<dbReference type="PRO" id="PR:O13865"/>
<dbReference type="Proteomes" id="UP000002485">
    <property type="component" value="Chromosome I"/>
</dbReference>
<dbReference type="GO" id="GO:0005829">
    <property type="term" value="C:cytosol"/>
    <property type="evidence" value="ECO:0007005"/>
    <property type="project" value="PomBase"/>
</dbReference>
<dbReference type="GO" id="GO:0000932">
    <property type="term" value="C:P-body"/>
    <property type="evidence" value="ECO:0000318"/>
    <property type="project" value="GO_Central"/>
</dbReference>
<dbReference type="GO" id="GO:0031251">
    <property type="term" value="C:PAN complex"/>
    <property type="evidence" value="ECO:0000318"/>
    <property type="project" value="GO_Central"/>
</dbReference>
<dbReference type="GO" id="GO:0008143">
    <property type="term" value="F:poly(A) binding"/>
    <property type="evidence" value="ECO:0000318"/>
    <property type="project" value="GO_Central"/>
</dbReference>
<dbReference type="GO" id="GO:0008270">
    <property type="term" value="F:zinc ion binding"/>
    <property type="evidence" value="ECO:0007669"/>
    <property type="project" value="UniProtKB-KW"/>
</dbReference>
<dbReference type="GO" id="GO:0000289">
    <property type="term" value="P:nuclear-transcribed mRNA poly(A) tail shortening"/>
    <property type="evidence" value="ECO:0000318"/>
    <property type="project" value="GO_Central"/>
</dbReference>
<dbReference type="Gene3D" id="1.10.287.3700">
    <property type="match status" value="1"/>
</dbReference>
<dbReference type="Gene3D" id="1.20.5.5160">
    <property type="match status" value="1"/>
</dbReference>
<dbReference type="Gene3D" id="6.10.250.3160">
    <property type="match status" value="1"/>
</dbReference>
<dbReference type="Gene3D" id="1.10.510.10">
    <property type="entry name" value="Transferase(Phosphotransferase) domain 1"/>
    <property type="match status" value="1"/>
</dbReference>
<dbReference type="InterPro" id="IPR011009">
    <property type="entry name" value="Kinase-like_dom_sf"/>
</dbReference>
<dbReference type="InterPro" id="IPR030844">
    <property type="entry name" value="PAN3"/>
</dbReference>
<dbReference type="InterPro" id="IPR041332">
    <property type="entry name" value="Pan3_PK"/>
</dbReference>
<dbReference type="PANTHER" id="PTHR12272">
    <property type="entry name" value="DEADENYLATION COMPLEX SUBUNIT PAN3"/>
    <property type="match status" value="1"/>
</dbReference>
<dbReference type="PANTHER" id="PTHR12272:SF12">
    <property type="entry name" value="PAB-DEPENDENT POLY(A)-SPECIFIC RIBONUCLEASE SUBUNIT PAN3-LIKE"/>
    <property type="match status" value="1"/>
</dbReference>
<dbReference type="Pfam" id="PF18101">
    <property type="entry name" value="Pan3_PK"/>
    <property type="match status" value="1"/>
</dbReference>
<dbReference type="SUPFAM" id="SSF56112">
    <property type="entry name" value="Protein kinase-like (PK-like)"/>
    <property type="match status" value="1"/>
</dbReference>